<gene>
    <name type="primary">IGF2BP1</name>
    <name type="synonym">VICKZ1</name>
    <name type="synonym">ZBP1</name>
</gene>
<feature type="chain" id="PRO_0000282536" description="Insulin-like growth factor 2 mRNA-binding protein 1">
    <location>
        <begin position="1"/>
        <end position="576"/>
    </location>
</feature>
<feature type="domain" description="RRM 1" evidence="3">
    <location>
        <begin position="2"/>
        <end position="75"/>
    </location>
</feature>
<feature type="domain" description="RRM 2" evidence="3">
    <location>
        <begin position="81"/>
        <end position="156"/>
    </location>
</feature>
<feature type="domain" description="KH 1" evidence="2">
    <location>
        <begin position="195"/>
        <end position="260"/>
    </location>
</feature>
<feature type="domain" description="KH 2" evidence="2">
    <location>
        <begin position="276"/>
        <end position="343"/>
    </location>
</feature>
<feature type="domain" description="KH 3" evidence="2">
    <location>
        <begin position="404"/>
        <end position="469"/>
    </location>
</feature>
<feature type="domain" description="KH 4" evidence="2">
    <location>
        <begin position="486"/>
        <end position="552"/>
    </location>
</feature>
<feature type="region of interest" description="Disordered" evidence="4">
    <location>
        <begin position="158"/>
        <end position="189"/>
    </location>
</feature>
<feature type="modified residue" description="Phosphotyrosine; by SRC" evidence="8">
    <location>
        <position position="396"/>
    </location>
</feature>
<feature type="mutagenesis site" description="Decrease in Y RNA binding. Only small decrease in affinity for binding to ACTB and MYC transcripts, some accumulation in the nucleus, and complete loss of formation of higher ordered protein-RNA complexes; when associated with E-294. Loss of homo- and heterooligomerization with IGF2BP1 and IGF2BP2, almost complete loss of ACTB and MYC transcript binding, almost complete loss of ELAVL1-, DHX9- and HNRNPU-binding and perturbed subcellular location, including accumulation in the nucleus and loss of localization to stress granules; when associated with E-294, 422-E-E-423 and 505-E-E-506." evidence="10">
    <original>K</original>
    <variation>E</variation>
    <location>
        <position position="213"/>
    </location>
</feature>
<feature type="mutagenesis site" description="Decrease in Y RNA binding. Only small decrease in affinity for binding to ACTB and MYC transcripts, some accumulation in the nucleus, and complete loss of formation of higher ordered protein-RNA complexes; when associated with E-213. Loss of homo- and heterooligomerization with IGF2BP1 and IGF2BP2, almost complete loss of ACTB and MYC transcript binding, almost complete loss of ELAVL1-, DHX9- and HNRNPU-binding and accumulation in the nucleus; when associated with E-213, 422-E-E-423 and 505-E-E-506." evidence="10">
    <original>K</original>
    <variation>E</variation>
    <location>
        <position position="294"/>
    </location>
</feature>
<feature type="mutagenesis site" description="Increases the interaction with ACTB mRNA and its translational repression." evidence="8">
    <original>Y</original>
    <variation>F</variation>
    <location>
        <position position="396"/>
    </location>
</feature>
<feature type="mutagenesis site" description="Impairs the interaction with beta-actin mRNA and its translation repression." evidence="8">
    <original>Y</original>
    <variation>Q</variation>
    <location>
        <position position="396"/>
    </location>
</feature>
<feature type="mutagenesis site" description="Almost complete loss of Y RNA binding. About 80-fold decrease in affinity for binding to ACTB transcript, but almost no effect on MYC transcript binding; when associated with 505-E-E-506. Loss of homo- and heterooligomerization with IGF2BP1 and IGF2BP2, almost complete loss of ACTB and MYC transcript binding, almost complete loss of ELAVL1-, DHX9- and HNRNPU-binding and accumulation in the nucleus; when associated with E-213, E-294 and 505-E-E-506.">
    <original>KK</original>
    <variation>EE</variation>
    <location>
        <begin position="422"/>
        <end position="423"/>
    </location>
</feature>
<feature type="mutagenesis site" description="Decrease in Y RNA binding. About 80-fold decrease in affinity for binding to ACTB transcript, but almost no effect on MYC transcript binding; when associated with 422-E-E-423. Loss of homo- and heterooligomerization with IGF2BP1 and IGF2BP2, almost complete loss of ACTB and MYC transcript binding, almost complete loss of ELAVL1-, DHX9- and HNRNPU-binding and accumulation in the nucleus; when associated with E-213, E-294 and 422-E-E-423.">
    <original>KG</original>
    <variation>EE</variation>
    <location>
        <begin position="504"/>
        <end position="505"/>
    </location>
</feature>
<feature type="strand" evidence="13">
    <location>
        <begin position="404"/>
        <end position="412"/>
    </location>
</feature>
<feature type="helix" evidence="13">
    <location>
        <begin position="413"/>
        <end position="420"/>
    </location>
</feature>
<feature type="helix" evidence="13">
    <location>
        <begin position="422"/>
        <end position="424"/>
    </location>
</feature>
<feature type="helix" evidence="13">
    <location>
        <begin position="426"/>
        <end position="434"/>
    </location>
</feature>
<feature type="strand" evidence="13">
    <location>
        <begin position="436"/>
        <end position="440"/>
    </location>
</feature>
<feature type="strand" evidence="13">
    <location>
        <begin position="449"/>
        <end position="457"/>
    </location>
</feature>
<feature type="helix" evidence="13">
    <location>
        <begin position="459"/>
        <end position="476"/>
    </location>
</feature>
<feature type="strand" evidence="13">
    <location>
        <begin position="481"/>
        <end position="483"/>
    </location>
</feature>
<feature type="strand" evidence="13">
    <location>
        <begin position="489"/>
        <end position="494"/>
    </location>
</feature>
<feature type="helix" evidence="13">
    <location>
        <begin position="495"/>
        <end position="501"/>
    </location>
</feature>
<feature type="strand" evidence="13">
    <location>
        <begin position="504"/>
        <end position="506"/>
    </location>
</feature>
<feature type="helix" evidence="13">
    <location>
        <begin position="508"/>
        <end position="516"/>
    </location>
</feature>
<feature type="strand" evidence="13">
    <location>
        <begin position="518"/>
        <end position="521"/>
    </location>
</feature>
<feature type="helix" evidence="13">
    <location>
        <begin position="529"/>
        <end position="531"/>
    </location>
</feature>
<feature type="strand" evidence="13">
    <location>
        <begin position="533"/>
        <end position="540"/>
    </location>
</feature>
<feature type="helix" evidence="13">
    <location>
        <begin position="542"/>
        <end position="560"/>
    </location>
</feature>
<feature type="helix" evidence="13">
    <location>
        <begin position="561"/>
        <end position="563"/>
    </location>
</feature>
<feature type="turn" evidence="14">
    <location>
        <begin position="565"/>
        <end position="569"/>
    </location>
</feature>
<comment type="function">
    <text evidence="1 5 6 7 8 9 10 11">RNA-binding factor that recruits target transcripts to cytoplasmic protein-RNA complexes (mRNPs). This transcript 'caging' into mRNPs allows mRNA transport and transient storage. It also modulates the rate and location at which target transcripts encounter the translational apparatus and shields them from endonuclease attacks or microRNA-mediated degradation. Preferentially binds to N6-methyladenosine (m6A)-containing mRNAs and increases their stability (By similarity). Plays a direct role in the transport and translation of transcripts required for axonal regeneration in adult sensory neurons (By similarity). Regulates localized beta-actin/ACTB mRNA translation in polarized cells, a crucial process for cell migration and neurite outgrowth. Co-transcriptionally associates with the ACTB mRNA in the nucleus. This binding involves by a conserved 54-nucleotide element in the ACTB mRNA 3'-UTR, known as the 'zipcode'. The ribonucleoparticle (RNP) thus formed is exported to the cytoplasm, binds to a motor protein and is transported along the cytoskeleton to the cell periphery. During transport, IGF2BP1 prevents beta-actin mRNA from being translated into protein. When the RNP complex reaches its destination near the plasma membrane, IGF2BP1 is phosphorylated by SRC. This releases the mRNA, allowing ribosomal 40S and 60S subunits to assemble and initiate ACTB protein synthesis. The monomeric ACTB protein then assembles into the subcortical actin cytoskeleton, which pushes the leading edge onwards. Binds MYC mRNA. Binding to MYC mRNA is enhanced by m6A-modification of the CRD (By similarity). Promotes the directed movement of cells by fine-tuning intracellular signaling networks. Binds to MAPK4 3'-UTR and inhibits its translation. Interacts with PTEN transcript open reading frame (ORF) and prevents mRNA decay. This combined action on MAPK4 (down-regulation) and PTEN (up-regulation) antagonizes HSPB1 phosphorylation, consequently it prevents G-actin sequestration by phosphorylated HSPB1, allowing F-actin polymerization. Hence enhances the velocity of cell migration and stimulates directed cell migration by PTEN-modulated polarization.</text>
</comment>
<comment type="subunit">
    <text evidence="10">Can form homooligomers and heterooligomers with IGF2BP1 and IGF2BP3 in an RNA-dependent manner. Associates with the cytoskeleton, predominantly with actin filament bundles and occasionally with microtubules. In a heterologous system, interacts with ELAVL1, DHX9 and HNRNPU.</text>
</comment>
<comment type="subcellular location">
    <subcellularLocation>
        <location>Nucleus</location>
    </subcellularLocation>
    <subcellularLocation>
        <location>Cytoplasm</location>
    </subcellularLocation>
    <subcellularLocation>
        <location>Cytoplasm</location>
        <location>Perinuclear region</location>
    </subcellularLocation>
    <subcellularLocation>
        <location evidence="1">Cytoplasm</location>
        <location evidence="1">P-body</location>
    </subcellularLocation>
    <subcellularLocation>
        <location evidence="1">Cytoplasm</location>
        <location evidence="1">Stress granule</location>
    </subcellularLocation>
    <subcellularLocation>
        <location>Cell projection</location>
        <location>Growth cone</location>
    </subcellularLocation>
    <subcellularLocation>
        <location>Cell projection</location>
        <location>Filopodium</location>
    </subcellularLocation>
    <subcellularLocation>
        <location>Cell projection</location>
        <location>Lamellipodium</location>
    </subcellularLocation>
    <text>In the nucleus, located in discrete foci, coinciding with the sites of ACTB transcription. Export from the nucleus is mediated by XPO1. In the cytoplasm, colocalizes with ACTB mRNA at the leading edge, in growth cone filopodia and along neurites. In these locations, also colocalizes with microtubules. Colocalization with ACTB mRNA is partially lost at the cell periphery, suggesting release of the transcript. In neuronal processes, exhibits fast retrograde and anterograde movements, when associated with ACTB mRNA; this motility is lost when the association is inhibited. In migrating fibroblasts, localizes not only to leading edges, but also to retracting tails. In response to cellular stress, such as oxidative stress or heat shock, recruited to stress granules.</text>
</comment>
<comment type="tissue specificity">
    <text evidence="5 11">Expressed in neurons and embryonic fibroblasts (at protein level).</text>
</comment>
<comment type="domain">
    <text evidence="1">Domains KH3 and KH4 are the major RNA-binding modules, although KH1 and KH2 may also contribute to transcript binding. The contribution to RNA-binding of individual KH domains may be target-specific. KH1 and KH2, and possibly KH3 and KH4, promote the formation of higher ordered protein-RNA complexes, which may be essential for IGF2BP1 cytoplasmic retention. KH domains are required for RNA-dependent homo- and heterooligomerization and for localization to stress granules. KH3 and KH4 mediate association with the cytoskeleton. Two nuclear export signals (NES) have been identified in KH2 and KH4 domains, respectively. Only KH2 NES is XPO1-dependent. Both NES may be redundant, since individual in vitro mutations do not affect subcellular location of the full length protein.</text>
</comment>
<comment type="PTM">
    <text evidence="8">Phosphorylated by SRC at Tyr-396. This residue is involved in ACTB mRNA binding, its phosphorylation impairs association with ACTB mRNA and hence abolishes translational repression. Phosphorylation occurs in close proximity to filopodia and in the growth cones of differentiated neuroglioblastoma cells.</text>
</comment>
<comment type="similarity">
    <text evidence="12">Belongs to the RRM IMP/VICKZ family.</text>
</comment>
<sequence length="576" mass="63271">MNKLYIGNLNESVTPADLEKVFNDHKISFSGQFLVKSGYAFVDCPDEQWAMKAIETFSGKVELHGKQLEIEHSVPKKQRSRKIQIRNIPPQLRWEVLDGLLAQYGTVENCEQVNTDSETAVVNVTYTNREQTRQAIMKLNGHQLENHVLKVSYIPDEQSVQGPENGRRGGFGARGAPRQGSPVTAGAPVKQQPVDIPLRLLVPTQYVGAIIGKEGATIRNITKQTQSKIDVHRKENAGAAEKAISIHSTPEGCSAACKMILEIMQKEAKDTKTADEVPLKILAHNNFVGRLIGKEGRNLKKVEQDTETKITISSLQDLTLYNPERTITVKGSIENCCKAEQEIMKKVREAYENDVAAMSLQSHLIPGLNLAAVGLFPASSNAVPPPPSSVSGAAPYSSFMPPEQETVHVFIPAQAVGAIIGKKGQHIKQLSRFASASIKIAPPETPDSKVRMVVITGPPEAQFKAQGRIYGKLKEENFFGPKEEVKLETHIRVPASAAGRVIGKGGKTVNELQNLTAAEVVVPRDQTPDENEQVIVKIIGHFYASQMAQRKIRDILAQVKQQHQKGQSGQLQARRK</sequence>
<proteinExistence type="evidence at protein level"/>
<keyword id="KW-0002">3D-structure</keyword>
<keyword id="KW-0966">Cell projection</keyword>
<keyword id="KW-0963">Cytoplasm</keyword>
<keyword id="KW-0509">mRNA transport</keyword>
<keyword id="KW-0539">Nucleus</keyword>
<keyword id="KW-0597">Phosphoprotein</keyword>
<keyword id="KW-1185">Reference proteome</keyword>
<keyword id="KW-0677">Repeat</keyword>
<keyword id="KW-0694">RNA-binding</keyword>
<keyword id="KW-0810">Translation regulation</keyword>
<keyword id="KW-0813">Transport</keyword>
<evidence type="ECO:0000250" key="1">
    <source>
        <dbReference type="UniProtKB" id="Q9NZI8"/>
    </source>
</evidence>
<evidence type="ECO:0000255" key="2">
    <source>
        <dbReference type="PROSITE-ProRule" id="PRU00117"/>
    </source>
</evidence>
<evidence type="ECO:0000255" key="3">
    <source>
        <dbReference type="PROSITE-ProRule" id="PRU00176"/>
    </source>
</evidence>
<evidence type="ECO:0000256" key="4">
    <source>
        <dbReference type="SAM" id="MobiDB-lite"/>
    </source>
</evidence>
<evidence type="ECO:0000269" key="5">
    <source>
    </source>
</evidence>
<evidence type="ECO:0000269" key="6">
    <source>
    </source>
</evidence>
<evidence type="ECO:0000269" key="7">
    <source>
    </source>
</evidence>
<evidence type="ECO:0000269" key="8">
    <source>
    </source>
</evidence>
<evidence type="ECO:0000269" key="9">
    <source>
    </source>
</evidence>
<evidence type="ECO:0000269" key="10">
    <source>
    </source>
</evidence>
<evidence type="ECO:0000269" key="11">
    <source>
    </source>
</evidence>
<evidence type="ECO:0000305" key="12"/>
<evidence type="ECO:0007829" key="13">
    <source>
        <dbReference type="PDB" id="2N8L"/>
    </source>
</evidence>
<evidence type="ECO:0007829" key="14">
    <source>
        <dbReference type="PDB" id="2N8M"/>
    </source>
</evidence>
<reference key="1">
    <citation type="journal article" date="1997" name="Mol. Cell. Biol.">
        <title>Characterization of a beta-actin mRNA zipcode-binding protein.</title>
        <authorList>
            <person name="Ross A.F."/>
            <person name="Oleynikov Y."/>
            <person name="Kislauskis E.H."/>
            <person name="Taneja K.L."/>
            <person name="Singer R.H."/>
        </authorList>
    </citation>
    <scope>NUCLEOTIDE SEQUENCE [MRNA]</scope>
    <scope>FUNCTION</scope>
    <scope>RNA-BINDING</scope>
    <scope>TISSUE SPECIFICITY</scope>
    <source>
        <tissue>Embryonic fibroblast</tissue>
    </source>
</reference>
<reference key="2">
    <citation type="journal article" date="2001" name="Neuron">
        <title>Neurotrophin-induced transport of a beta-actin mRNP complex increases beta-actin levels and stimulates growth cone motility.</title>
        <authorList>
            <person name="Zhang H.L."/>
            <person name="Eom T."/>
            <person name="Oleynikov Y."/>
            <person name="Shenoy S.M."/>
            <person name="Liebelt D.A."/>
            <person name="Dictenberg J.B."/>
            <person name="Singer R.H."/>
            <person name="Bassell G.J."/>
        </authorList>
    </citation>
    <scope>FUNCTION</scope>
    <scope>SUBCELLULAR LOCATION</scope>
    <scope>TISSUE SPECIFICITY</scope>
</reference>
<reference key="3">
    <citation type="journal article" date="2003" name="Curr. Biol.">
        <title>Real-time visualization of ZBP1 association with beta-actin mRNA during transcription and localization.</title>
        <authorList>
            <person name="Oleynikov Y."/>
            <person name="Singer R.H."/>
        </authorList>
    </citation>
    <scope>FUNCTION</scope>
    <scope>RNA-BINDING</scope>
    <scope>ASSOCIATION WITH CYTOSKELETON</scope>
    <scope>SUBCELLULAR LOCATION</scope>
</reference>
<reference key="4">
    <citation type="journal article" date="2003" name="J. Cell Biol.">
        <title>Two ZBP1 KH domains facilitate beta-actin mRNA localization, granule formation, and cytoskeletal attachment.</title>
        <authorList>
            <person name="Farina K.L."/>
            <person name="Huttelmaier S."/>
            <person name="Musunuru K."/>
            <person name="Darnell R."/>
            <person name="Singer R.H."/>
        </authorList>
    </citation>
    <scope>FUNCTION</scope>
    <scope>RNA-BINDING</scope>
    <scope>ASSOCIATION WITH CYTOSKELETON</scope>
    <scope>SUBCELLULAR LOCATION</scope>
    <scope>DOMAIN</scope>
</reference>
<reference key="5">
    <citation type="journal article" date="2006" name="J. Cell Biol.">
        <title>ZBP1 regulates mRNA stability during cellular stress.</title>
        <authorList>
            <person name="Stoehr N."/>
            <person name="Lederer M."/>
            <person name="Reinke C."/>
            <person name="Meyer S."/>
            <person name="Hatzfeld M."/>
            <person name="Singer R.H."/>
            <person name="Huettelmaier S."/>
        </authorList>
    </citation>
    <scope>SUBCELLULAR LOCATION</scope>
</reference>
<reference key="6">
    <citation type="journal article" date="2005" name="Nature">
        <title>Spatial regulation of beta-actin translation by Src-dependent phosphorylation of ZBP1.</title>
        <authorList>
            <person name="Huttelmaier S."/>
            <person name="Zenklusen D."/>
            <person name="Lederer M."/>
            <person name="Dictenberg J."/>
            <person name="Lorenz M."/>
            <person name="Meng X."/>
            <person name="Bassell G.J."/>
            <person name="Condeelis J."/>
            <person name="Singer R.H."/>
        </authorList>
    </citation>
    <scope>FUNCTION</scope>
    <scope>PHOSPHORYLATION AT TYR-396</scope>
    <scope>MUTAGENESIS OF TYR-396</scope>
    <scope>SUBCELLULAR LOCATION</scope>
</reference>
<reference key="7">
    <citation type="journal article" date="2012" name="Genes Dev.">
        <title>IGF2BP1 promotes cell migration by regulating MK5 and PTEN signaling.</title>
        <authorList>
            <person name="Stohr N."/>
            <person name="Kohn M."/>
            <person name="Lederer M."/>
            <person name="Glass M."/>
            <person name="Reinke C."/>
            <person name="Singer R.H."/>
            <person name="Huttelmaier S."/>
        </authorList>
    </citation>
    <scope>FUNCTION IN CELL MIGRATION</scope>
</reference>
<reference key="8">
    <citation type="journal article" date="2013" name="Biol. Chem.">
        <title>Subcellular localization and RNP formation of IGF2BPs (IGF2 mRNA-binding proteins) is modulated by distinct RNA-binding domains.</title>
        <authorList>
            <person name="Wachter K."/>
            <person name="Kohn M."/>
            <person name="Stohr N."/>
            <person name="Huttelmaier S."/>
        </authorList>
    </citation>
    <scope>FUNCTION</scope>
    <scope>RNA-BINDING</scope>
    <scope>OLIGOMERIZATION</scope>
    <scope>INTERACTION WITH ELAVL1; DHX9 AND HNRNPU</scope>
    <scope>SUBCELLULAR LOCATION</scope>
    <scope>DOMAIN</scope>
    <scope>MUTAGENESIS OF LYS-213; LYS-294; 423-LYS-LYS-424 AND 505-LYS-GLY-506</scope>
</reference>
<reference key="9">
    <citation type="journal article" date="2013" name="Cell. Mol. Life Sci.">
        <title>Insulin-like growth factor 2 mRNA-binding proteins (IGF2BPs): post-transcriptional drivers of cancer progression?</title>
        <authorList>
            <person name="Bell J.L."/>
            <person name="Wachter K."/>
            <person name="Muhleck B."/>
            <person name="Pazaitis N."/>
            <person name="Kohn M."/>
            <person name="Lederer M."/>
            <person name="Huttelmaier S."/>
        </authorList>
    </citation>
    <scope>REVIEW</scope>
</reference>
<accession>O42254</accession>
<name>IF2B1_CHICK</name>
<dbReference type="EMBL" id="AF026527">
    <property type="protein sequence ID" value="AAB82295.1"/>
    <property type="molecule type" value="mRNA"/>
</dbReference>
<dbReference type="RefSeq" id="NP_990402.1">
    <property type="nucleotide sequence ID" value="NM_205071.2"/>
</dbReference>
<dbReference type="PDB" id="2N8L">
    <property type="method" value="NMR"/>
    <property type="chains" value="A=387-573"/>
</dbReference>
<dbReference type="PDB" id="2N8M">
    <property type="method" value="NMR"/>
    <property type="chains" value="A=387-573"/>
</dbReference>
<dbReference type="PDB" id="8COO">
    <property type="method" value="NMR"/>
    <property type="chains" value="A=387-573"/>
</dbReference>
<dbReference type="PDBsum" id="2N8L"/>
<dbReference type="PDBsum" id="2N8M"/>
<dbReference type="PDBsum" id="8COO"/>
<dbReference type="BMRB" id="O42254"/>
<dbReference type="SMR" id="O42254"/>
<dbReference type="FunCoup" id="O42254">
    <property type="interactions" value="325"/>
</dbReference>
<dbReference type="STRING" id="9031.ENSGALP00000053168"/>
<dbReference type="iPTMnet" id="O42254"/>
<dbReference type="PaxDb" id="9031-ENSGALP00000001973"/>
<dbReference type="GeneID" id="395953"/>
<dbReference type="KEGG" id="gga:395953"/>
<dbReference type="CTD" id="10642"/>
<dbReference type="VEuPathDB" id="HostDB:geneid_395953"/>
<dbReference type="eggNOG" id="KOG2193">
    <property type="taxonomic scope" value="Eukaryota"/>
</dbReference>
<dbReference type="HOGENOM" id="CLU_020744_1_0_1"/>
<dbReference type="InParanoid" id="O42254"/>
<dbReference type="OMA" id="AKDTKTX"/>
<dbReference type="OrthoDB" id="752362at2759"/>
<dbReference type="PhylomeDB" id="O42254"/>
<dbReference type="TreeFam" id="TF320229"/>
<dbReference type="PRO" id="PR:O42254"/>
<dbReference type="Proteomes" id="UP000000539">
    <property type="component" value="Unassembled WGS sequence"/>
</dbReference>
<dbReference type="GO" id="GO:0070937">
    <property type="term" value="C:CRD-mediated mRNA stability complex"/>
    <property type="evidence" value="ECO:0000250"/>
    <property type="project" value="UniProtKB"/>
</dbReference>
<dbReference type="GO" id="GO:0005737">
    <property type="term" value="C:cytoplasm"/>
    <property type="evidence" value="ECO:0000318"/>
    <property type="project" value="GO_Central"/>
</dbReference>
<dbReference type="GO" id="GO:0010494">
    <property type="term" value="C:cytoplasmic stress granule"/>
    <property type="evidence" value="ECO:0000250"/>
    <property type="project" value="UniProtKB"/>
</dbReference>
<dbReference type="GO" id="GO:0005829">
    <property type="term" value="C:cytosol"/>
    <property type="evidence" value="ECO:0000318"/>
    <property type="project" value="GO_Central"/>
</dbReference>
<dbReference type="GO" id="GO:0030175">
    <property type="term" value="C:filopodium"/>
    <property type="evidence" value="ECO:0000314"/>
    <property type="project" value="AgBase"/>
</dbReference>
<dbReference type="GO" id="GO:0030426">
    <property type="term" value="C:growth cone"/>
    <property type="evidence" value="ECO:0000314"/>
    <property type="project" value="AgBase"/>
</dbReference>
<dbReference type="GO" id="GO:0030027">
    <property type="term" value="C:lamellipodium"/>
    <property type="evidence" value="ECO:0007669"/>
    <property type="project" value="UniProtKB-SubCell"/>
</dbReference>
<dbReference type="GO" id="GO:0005634">
    <property type="term" value="C:nucleus"/>
    <property type="evidence" value="ECO:0000314"/>
    <property type="project" value="AgBase"/>
</dbReference>
<dbReference type="GO" id="GO:0000932">
    <property type="term" value="C:P-body"/>
    <property type="evidence" value="ECO:0000250"/>
    <property type="project" value="UniProtKB"/>
</dbReference>
<dbReference type="GO" id="GO:0048471">
    <property type="term" value="C:perinuclear region of cytoplasm"/>
    <property type="evidence" value="ECO:0007669"/>
    <property type="project" value="UniProtKB-SubCell"/>
</dbReference>
<dbReference type="GO" id="GO:0003730">
    <property type="term" value="F:mRNA 3'-UTR binding"/>
    <property type="evidence" value="ECO:0000250"/>
    <property type="project" value="UniProtKB"/>
</dbReference>
<dbReference type="GO" id="GO:0003729">
    <property type="term" value="F:mRNA binding"/>
    <property type="evidence" value="ECO:0000315"/>
    <property type="project" value="AgBase"/>
</dbReference>
<dbReference type="GO" id="GO:1990247">
    <property type="term" value="F:N6-methyladenosine-containing RNA reader activity"/>
    <property type="evidence" value="ECO:0000250"/>
    <property type="project" value="UniProtKB"/>
</dbReference>
<dbReference type="GO" id="GO:0070934">
    <property type="term" value="P:CRD-mediated mRNA stabilization"/>
    <property type="evidence" value="ECO:0000250"/>
    <property type="project" value="UniProtKB"/>
</dbReference>
<dbReference type="GO" id="GO:0051028">
    <property type="term" value="P:mRNA transport"/>
    <property type="evidence" value="ECO:0007669"/>
    <property type="project" value="UniProtKB-KW"/>
</dbReference>
<dbReference type="GO" id="GO:0017148">
    <property type="term" value="P:negative regulation of translation"/>
    <property type="evidence" value="ECO:0000314"/>
    <property type="project" value="AgBase"/>
</dbReference>
<dbReference type="GO" id="GO:0007399">
    <property type="term" value="P:nervous system development"/>
    <property type="evidence" value="ECO:0000318"/>
    <property type="project" value="GO_Central"/>
</dbReference>
<dbReference type="GO" id="GO:0010976">
    <property type="term" value="P:positive regulation of neuron projection development"/>
    <property type="evidence" value="ECO:0000315"/>
    <property type="project" value="AgBase"/>
</dbReference>
<dbReference type="CDD" id="cd22490">
    <property type="entry name" value="KH-I_IGF2BP1_rpt1"/>
    <property type="match status" value="1"/>
</dbReference>
<dbReference type="CDD" id="cd22493">
    <property type="entry name" value="KH-I_IGF2BP1_rpt2"/>
    <property type="match status" value="1"/>
</dbReference>
<dbReference type="CDD" id="cd22496">
    <property type="entry name" value="KH-I_IGF2BP1_rpt3"/>
    <property type="match status" value="1"/>
</dbReference>
<dbReference type="CDD" id="cd22499">
    <property type="entry name" value="KH-I_IGF2BP1_rpt4"/>
    <property type="match status" value="1"/>
</dbReference>
<dbReference type="CDD" id="cd12625">
    <property type="entry name" value="RRM1_IGF2BP1"/>
    <property type="match status" value="1"/>
</dbReference>
<dbReference type="CDD" id="cd12628">
    <property type="entry name" value="RRM2_IGF2BP1"/>
    <property type="match status" value="1"/>
</dbReference>
<dbReference type="FunFam" id="3.30.70.330:FF:000203">
    <property type="entry name" value="insulin-like growth factor 2 mRNA-binding protein 1"/>
    <property type="match status" value="1"/>
</dbReference>
<dbReference type="FunFam" id="3.30.310.210:FF:000001">
    <property type="entry name" value="insulin-like growth factor 2 mRNA-binding protein 1 isoform X1"/>
    <property type="match status" value="1"/>
</dbReference>
<dbReference type="FunFam" id="3.30.1370.10:FF:000026">
    <property type="entry name" value="Insulin-like growth factor 2 mRNA-binding protein 3"/>
    <property type="match status" value="1"/>
</dbReference>
<dbReference type="FunFam" id="3.30.1370.10:FF:000027">
    <property type="entry name" value="insulin-like growth factor 2 mRNA-binding protein 3 isoform X1"/>
    <property type="match status" value="1"/>
</dbReference>
<dbReference type="FunFam" id="3.30.70.330:FF:000099">
    <property type="entry name" value="insulin-like growth factor 2 mRNA-binding protein 3 isoform X1"/>
    <property type="match status" value="1"/>
</dbReference>
<dbReference type="Gene3D" id="3.30.310.210">
    <property type="match status" value="1"/>
</dbReference>
<dbReference type="Gene3D" id="3.30.70.330">
    <property type="match status" value="2"/>
</dbReference>
<dbReference type="Gene3D" id="3.30.1370.10">
    <property type="entry name" value="K Homology domain, type 1"/>
    <property type="match status" value="2"/>
</dbReference>
<dbReference type="InterPro" id="IPR034837">
    <property type="entry name" value="IGF2BP1_RRM1"/>
</dbReference>
<dbReference type="InterPro" id="IPR034842">
    <property type="entry name" value="IGF2BP1_RRM2"/>
</dbReference>
<dbReference type="InterPro" id="IPR004087">
    <property type="entry name" value="KH_dom"/>
</dbReference>
<dbReference type="InterPro" id="IPR004088">
    <property type="entry name" value="KH_dom_type_1"/>
</dbReference>
<dbReference type="InterPro" id="IPR036612">
    <property type="entry name" value="KH_dom_type_1_sf"/>
</dbReference>
<dbReference type="InterPro" id="IPR012677">
    <property type="entry name" value="Nucleotide-bd_a/b_plait_sf"/>
</dbReference>
<dbReference type="InterPro" id="IPR035979">
    <property type="entry name" value="RBD_domain_sf"/>
</dbReference>
<dbReference type="InterPro" id="IPR000504">
    <property type="entry name" value="RRM_dom"/>
</dbReference>
<dbReference type="PANTHER" id="PTHR10288">
    <property type="entry name" value="KH DOMAIN CONTAINING RNA BINDING PROTEIN"/>
    <property type="match status" value="1"/>
</dbReference>
<dbReference type="Pfam" id="PF00013">
    <property type="entry name" value="KH_1"/>
    <property type="match status" value="4"/>
</dbReference>
<dbReference type="Pfam" id="PF00076">
    <property type="entry name" value="RRM_1"/>
    <property type="match status" value="2"/>
</dbReference>
<dbReference type="SMART" id="SM00322">
    <property type="entry name" value="KH"/>
    <property type="match status" value="4"/>
</dbReference>
<dbReference type="SMART" id="SM00360">
    <property type="entry name" value="RRM"/>
    <property type="match status" value="2"/>
</dbReference>
<dbReference type="SUPFAM" id="SSF54791">
    <property type="entry name" value="Eukaryotic type KH-domain (KH-domain type I)"/>
    <property type="match status" value="4"/>
</dbReference>
<dbReference type="SUPFAM" id="SSF54928">
    <property type="entry name" value="RNA-binding domain, RBD"/>
    <property type="match status" value="1"/>
</dbReference>
<dbReference type="PROSITE" id="PS50084">
    <property type="entry name" value="KH_TYPE_1"/>
    <property type="match status" value="4"/>
</dbReference>
<dbReference type="PROSITE" id="PS50102">
    <property type="entry name" value="RRM"/>
    <property type="match status" value="2"/>
</dbReference>
<organism>
    <name type="scientific">Gallus gallus</name>
    <name type="common">Chicken</name>
    <dbReference type="NCBI Taxonomy" id="9031"/>
    <lineage>
        <taxon>Eukaryota</taxon>
        <taxon>Metazoa</taxon>
        <taxon>Chordata</taxon>
        <taxon>Craniata</taxon>
        <taxon>Vertebrata</taxon>
        <taxon>Euteleostomi</taxon>
        <taxon>Archelosauria</taxon>
        <taxon>Archosauria</taxon>
        <taxon>Dinosauria</taxon>
        <taxon>Saurischia</taxon>
        <taxon>Theropoda</taxon>
        <taxon>Coelurosauria</taxon>
        <taxon>Aves</taxon>
        <taxon>Neognathae</taxon>
        <taxon>Galloanserae</taxon>
        <taxon>Galliformes</taxon>
        <taxon>Phasianidae</taxon>
        <taxon>Phasianinae</taxon>
        <taxon>Gallus</taxon>
    </lineage>
</organism>
<protein>
    <recommendedName>
        <fullName>Insulin-like growth factor 2 mRNA-binding protein 1</fullName>
        <shortName>IGF2 mRNA-binding protein 1</shortName>
        <shortName>IMP-1</shortName>
    </recommendedName>
    <alternativeName>
        <fullName>IGF-II mRNA-binding protein 1</fullName>
    </alternativeName>
    <alternativeName>
        <fullName>VICKZ family member 1</fullName>
    </alternativeName>
    <alternativeName>
        <fullName>Zip-code binding polypeptide</fullName>
    </alternativeName>
    <alternativeName>
        <fullName>Zipcode-binding protein 1</fullName>
        <shortName>ZBP-1</shortName>
    </alternativeName>
</protein>